<evidence type="ECO:0000250" key="1"/>
<evidence type="ECO:0000250" key="2">
    <source>
        <dbReference type="UniProtKB" id="Q80TM9"/>
    </source>
</evidence>
<evidence type="ECO:0000255" key="3"/>
<evidence type="ECO:0000255" key="4">
    <source>
        <dbReference type="PROSITE-ProRule" id="PRU00147"/>
    </source>
</evidence>
<evidence type="ECO:0000256" key="5">
    <source>
        <dbReference type="SAM" id="MobiDB-lite"/>
    </source>
</evidence>
<evidence type="ECO:0000269" key="6">
    <source>
    </source>
</evidence>
<evidence type="ECO:0000269" key="7">
    <source>
    </source>
</evidence>
<evidence type="ECO:0000269" key="8">
    <source>
    </source>
</evidence>
<evidence type="ECO:0000269" key="9">
    <source>
    </source>
</evidence>
<evidence type="ECO:0000269" key="10">
    <source>
    </source>
</evidence>
<evidence type="ECO:0000269" key="11">
    <source>
    </source>
</evidence>
<evidence type="ECO:0000269" key="12">
    <source>
    </source>
</evidence>
<evidence type="ECO:0000269" key="13">
    <source>
    </source>
</evidence>
<evidence type="ECO:0000269" key="14">
    <source>
    </source>
</evidence>
<evidence type="ECO:0000269" key="15">
    <source>
    </source>
</evidence>
<evidence type="ECO:0000269" key="16">
    <source>
    </source>
</evidence>
<evidence type="ECO:0000269" key="17">
    <source>
    </source>
</evidence>
<evidence type="ECO:0000269" key="18">
    <source ref="7"/>
</evidence>
<evidence type="ECO:0000303" key="19">
    <source>
    </source>
</evidence>
<evidence type="ECO:0000303" key="20">
    <source>
    </source>
</evidence>
<evidence type="ECO:0000305" key="21"/>
<evidence type="ECO:0007744" key="22">
    <source>
    </source>
</evidence>
<evidence type="ECO:0007744" key="23">
    <source>
    </source>
</evidence>
<evidence type="ECO:0007744" key="24">
    <source>
    </source>
</evidence>
<evidence type="ECO:0007829" key="25">
    <source>
        <dbReference type="PDB" id="3P0C"/>
    </source>
</evidence>
<sequence length="1504" mass="166629">MATARTFGPEREAEPAKEARVVGSELVDTYTVYIIQVTDGSHEWTVKHRYSDFHDLHEKLVAERKIDKNLLPPKKIIGKNSRSLVEKREKDLEVYLQKLLAAFPGVTPRVLAHFLHFHFYEINGITAALAEELFEKGEQLLGAGEVFAIGPLQLYAVTEQLQQGKPTCASGDAKTDLGHILDFTCRLKYLKVSGTEGPFGTSNIQEQLLPFDLSIFKSLHQVEISHCDAKHIRGLVASKPTLATLSVRFSATSMKEVLVPEASEFDEWEPEGTTLEGPVTAVIPTWQALTTLDLSHNSVSEIDESVKLIPKIEFLDLSHNGLLVVDNLQHLYNLVHLDLSYNKLSSLEGLHTKLGNIKTLNLAGNLLESLSGLHKLYSLVNLDLRDNRIEQMEEVRSIGSLPCLEHVSLLNNPLSIIPDYRTKVLAQFGERASEVCLDDTVTTEKELDTVEVLKAIQKAKEVKSKLSNPEKKGGEDSRLSAAPCIRPSSSPPTVAPASASLPQPILSNQGIMFVQEEALASSLSSTDSLTPEHQPIAQGCSDSLESIPAGQAASDDLRDVPGAVGGASPEHAEPEVQVVPGSGQIIFLPFTCIGYTATNQDFIQRLSTLIRQAIERQLPAWIEAANQREEGQGEQGEEEDEEEEEEEDVAENRYFEMGPPDVEEEEGGGQGEEEEEEEEDEEAEEERLALEWALGADEDFLLEHIRILKVLWCFLIHVQGSIRQFAACLVLTDFGIAVFEIPHQESRGSSQHILSSLRFVFCFPHGDLTEFGFLMPELCLVLKVRHSENTLFIISDAANLHEFHADLRSCFAPQHMAMLCSPILYGSHTSLQEFLRQLLTFYKVAGGCQERSQGCFPVYLVYSDKRMVQTAAGDYSGNIEWASCTLCSAVRRSCCAPSEAVKSAAIPYWLLLTPQHLNVIKADFNPMPNRGTHNCRNRNSFKLSRVPLSTVLLDPTRSCTQPRGAFADGHVLELLVGYRFVTAIFVLPHEKFHFLRVYNQLRASLQDLKTVVIAKTPGTGGSPQGSFADGQPAERRASNDQRPQEVPAEALAPAPAEVPAPAPAAASASGPAKTPAPAEASTSALVPEETPVEAPAPPPAEAPAQYPSEHLIQATSEENQIPSHLPACPSLRHVASLRGSAIIELFHSSIAEVENEELRHLMWSSVVFYQTPGLEVTACVLLSTKAVYFVLHDGLRRYFSEPLQDFWHQKNTDYNNSPFHISQCFVLKLSDLQSVNVGLFDQHFRLTGSTPMQVVTCLTRDSYLTHCFLQHLMVVLSSLERTPSPEPVDKDFYSEFGNKTTGKMENYELIHSSRVKFTYPSEEEIGDLTFTVAQKMAEPEKAPALSILLYVQAFQVGMPPPGCCRGPLRPKTLLLTSSEIFLLDEDCVHYPLPEFAKEPPQRDRYRLDDGRRVRDLDRVLMGYQTYPQALTLVFDDVQGHDLMGSVTLDHFGEVPGGPARASQGREVQWQVFVPSAESREKLISLLARQWEALCGRELPVELTG</sequence>
<protein>
    <recommendedName>
        <fullName>Nischarin</fullName>
    </recommendedName>
    <alternativeName>
        <fullName>Imidazoline receptor 1</fullName>
        <shortName>I-1</shortName>
        <shortName>IR1</shortName>
    </alternativeName>
    <alternativeName>
        <fullName>Imidazoline receptor antisera-selected protein</fullName>
        <shortName>hIRAS</shortName>
    </alternativeName>
    <alternativeName>
        <fullName>Imidazoline-1 receptor</fullName>
        <shortName>I1R</shortName>
    </alternativeName>
    <alternativeName>
        <fullName>Imidazoline-1 receptor candidate protein</fullName>
        <shortName>I-1 receptor candidate protein</shortName>
        <shortName>I1R candidate protein</shortName>
    </alternativeName>
</protein>
<organism>
    <name type="scientific">Homo sapiens</name>
    <name type="common">Human</name>
    <dbReference type="NCBI Taxonomy" id="9606"/>
    <lineage>
        <taxon>Eukaryota</taxon>
        <taxon>Metazoa</taxon>
        <taxon>Chordata</taxon>
        <taxon>Craniata</taxon>
        <taxon>Vertebrata</taxon>
        <taxon>Euteleostomi</taxon>
        <taxon>Mammalia</taxon>
        <taxon>Eutheria</taxon>
        <taxon>Euarchontoglires</taxon>
        <taxon>Primates</taxon>
        <taxon>Haplorrhini</taxon>
        <taxon>Catarrhini</taxon>
        <taxon>Hominidae</taxon>
        <taxon>Homo</taxon>
    </lineage>
</organism>
<comment type="function">
    <text evidence="1 7 9 11 12 13">Acts either as the functional imidazoline-1 receptor (I1R) candidate or as a membrane-associated mediator of the I1R signaling. Binds numerous imidazoline ligands that induces initiation of cell-signaling cascades triggering to cell survival, growth and migration. Its activation by the agonist rilmenidine induces an increase in phosphorylation of mitogen-activated protein kinases MAPK1 and MAPK3 in rostral ventrolateral medulla (RVLM) neurons that exhibited rilmenidine-evoked hypotension (By similarity). Blocking its activation with efaroxan abolished rilmenidine-induced mitogen-activated protein kinase phosphorylation in RVLM neurons (By similarity). Acts as a modulator of Rac-regulated signal transduction pathways (By similarity). Suppresses Rac1-stimulated cell migration by interacting with PAK1 and inhibiting its kinase activity (By similarity). Also blocks Pak-independent Rac signaling by interacting with RAC1 and inhibiting Rac1-stimulated NF-kB response element and cyclin D1 promoter activation (By similarity). Also inhibits LIMK1 kinase activity by reducing LIMK1 'Tyr-508' phosphorylation (By similarity). Inhibits Rac-induced cell migration and invasion in breast and colon epithelial cells (By similarity). Inhibits lamellipodia formation, when overexpressed (By similarity). Plays a role in protection against apoptosis. Involved in association with IRS4 in the enhancement of insulin activation of MAPK1 and MAPK3. When overexpressed, induces a redistribution of cell surface ITGA5 integrin to intracellular endosomal structures.</text>
</comment>
<comment type="subunit">
    <text evidence="1 8 13 16">Homooligomer. Interacts with GRB2. Interacts with PIK3R1; probably associates with the PI3-kinase complex. Interacts with IRS4. Found in a complex with ITGA5 and PAK1. Found in a complex with LIMK1 and PAK1. Interacts with ITGA5 (via cytoplasmic domain); this interaction is direct. Interacts with PAK1 (via kinase domain); this interaction is direct and is increased upon activation of PAK1 (By similarity). Interacts with LIMK1 (via PDZ and kinase domain); this interaction is direct (By similarity). Interacts with LIMK2; this interaction depends on LIMK2 activity (By similarity). Interacts with RAC1 (activated state) (By similarity). Interacts with STK11; this interaction may increase STK11 activity.</text>
</comment>
<comment type="interaction">
    <interactant intactId="EBI-2688731">
        <id>Q9Y2I1</id>
    </interactant>
    <interactant intactId="EBI-2688731">
        <id>Q9Y2I1</id>
        <label>NISCH</label>
    </interactant>
    <organismsDiffer>false</organismsDiffer>
    <experiments>2</experiments>
</comment>
<comment type="interaction">
    <interactant intactId="EBI-2688731">
        <id>Q9Y2I1</id>
    </interactant>
    <interactant intactId="EBI-4401353">
        <id>P51151</id>
        <label>RAB9A</label>
    </interactant>
    <organismsDiffer>false</organismsDiffer>
    <experiments>8</experiments>
</comment>
<comment type="interaction">
    <interactant intactId="EBI-2688731">
        <id>Q9Y2I1</id>
    </interactant>
    <interactant intactId="EBI-917845">
        <id>P61107</id>
        <label>Rab14</label>
    </interactant>
    <organismsDiffer>true</organismsDiffer>
    <experiments>9</experiments>
</comment>
<comment type="interaction">
    <interactant intactId="EBI-2688731">
        <id>Q9Y2I1</id>
    </interactant>
    <interactant intactId="EBI-9029299">
        <id>P05714</id>
        <label>Rab4a</label>
    </interactant>
    <organismsDiffer>true</organismsDiffer>
    <experiments>3</experiments>
</comment>
<comment type="subcellular location">
    <subcellularLocation>
        <location>Cell membrane</location>
    </subcellularLocation>
    <subcellularLocation>
        <location>Cytoplasm</location>
    </subcellularLocation>
    <subcellularLocation>
        <location>Early endosome</location>
    </subcellularLocation>
    <subcellularLocation>
        <location>Recycling endosome</location>
    </subcellularLocation>
    <text evidence="1">Enriched in the early/sorting and recycling endosomes. Colocalized in early/sorting endosomes with EEA1 and SNX2 and in recycling endosomes with transferrin receptor. Detected in the perinuclear region partially associated with punctate structures (By similarity). Colocalizes with PAK1 in cytoplasm, vesicular structures in the perinuclear area and membrane ruffles (By similarity). Colocalizes with RAC1 in the cytoplasm and vesicles structures (By similarity). Colocalized with MAPK1 and MAPK3 in RVLM neurons (By similarity).</text>
</comment>
<comment type="alternative products">
    <event type="alternative splicing"/>
    <isoform>
        <id>Q9Y2I1-1</id>
        <name>1</name>
        <name>IRAS-1</name>
        <name>IRAS-M</name>
        <sequence type="displayed"/>
    </isoform>
    <isoform>
        <id>Q9Y2I1-2</id>
        <name>2</name>
        <sequence type="described" ref="VSP_035131"/>
    </isoform>
    <isoform>
        <id>Q9Y2I1-3</id>
        <name>3</name>
        <name>IRAS-L</name>
        <sequence type="described" ref="VSP_035132 VSP_035135"/>
    </isoform>
    <isoform>
        <id>Q9Y2I1-4</id>
        <name>4</name>
        <name>IRAS-S</name>
        <sequence type="described" ref="VSP_035133 VSP_035134"/>
    </isoform>
</comment>
<comment type="tissue specificity">
    <text evidence="12 17">Isoform 1, isoform 3 and isoform 4 are expressed in brain. Isoform 1 is expressed in endocrine tissues.</text>
</comment>
<comment type="domain">
    <text>Both the presence of the PX domain and the coiled coil region are necessary for its endosomal targeting.</text>
</comment>
<comment type="sequence caution" evidence="21">
    <conflict type="erroneous initiation">
        <sequence resource="EMBL-CDS" id="BAA76819"/>
    </conflict>
    <text>Extended N-terminus.</text>
</comment>
<reference key="1">
    <citation type="journal article" date="2000" name="DNA Cell Biol.">
        <title>Imidazoline receptor antisera-selected (IRAS) cDNA: cloning and characterization.</title>
        <authorList>
            <person name="Piletz J.E."/>
            <person name="Ivanov T.R."/>
            <person name="Sharp J.D."/>
            <person name="Ernsberger P."/>
            <person name="Chang C.-H."/>
            <person name="Pickard R.T."/>
            <person name="Gold G."/>
            <person name="Roth B."/>
            <person name="Zhu H."/>
            <person name="Jones J.C."/>
            <person name="Baldwin J."/>
            <person name="Reis D.J."/>
        </authorList>
    </citation>
    <scope>NUCLEOTIDE SEQUENCE [MRNA] (ISOFORM 1)</scope>
    <scope>FUNCTION</scope>
    <scope>SUBCELLULAR LOCATION</scope>
    <scope>VARIANTS ILE-299 AND VAL-1056</scope>
</reference>
<reference key="2">
    <citation type="journal article" date="2003" name="Ann. N. Y. Acad. Sci.">
        <title>IRAS splice variants.</title>
        <authorList>
            <person name="Piletz J.E."/>
            <person name="Deleersnijder W."/>
            <person name="Roth B.L."/>
            <person name="Ernsberger P."/>
            <person name="Zhu H."/>
            <person name="Ziegler D."/>
        </authorList>
    </citation>
    <scope>NUCLEOTIDE SEQUENCE [MRNA] (ISOFORMS 1; 3 AND 4)</scope>
    <scope>FUNCTION</scope>
    <scope>TISSUE SPECIFICITY</scope>
    <scope>VARIANT ILE-299</scope>
</reference>
<reference key="3">
    <citation type="journal article" date="1999" name="DNA Res.">
        <title>Prediction of the coding sequences of unidentified human genes. XIII. The complete sequences of 100 new cDNA clones from brain which code for large proteins in vitro.</title>
        <authorList>
            <person name="Nagase T."/>
            <person name="Ishikawa K."/>
            <person name="Suyama M."/>
            <person name="Kikuno R."/>
            <person name="Hirosawa M."/>
            <person name="Miyajima N."/>
            <person name="Tanaka A."/>
            <person name="Kotani H."/>
            <person name="Nomura N."/>
            <person name="Ohara O."/>
        </authorList>
    </citation>
    <scope>NUCLEOTIDE SEQUENCE [LARGE SCALE MRNA] (ISOFORM 1)</scope>
    <scope>VARIANTS ILE-299 AND VAL-1056</scope>
    <source>
        <tissue>Brain</tissue>
    </source>
</reference>
<reference key="4">
    <citation type="journal article" date="2004" name="Nat. Genet.">
        <title>Complete sequencing and characterization of 21,243 full-length human cDNAs.</title>
        <authorList>
            <person name="Ota T."/>
            <person name="Suzuki Y."/>
            <person name="Nishikawa T."/>
            <person name="Otsuki T."/>
            <person name="Sugiyama T."/>
            <person name="Irie R."/>
            <person name="Wakamatsu A."/>
            <person name="Hayashi K."/>
            <person name="Sato H."/>
            <person name="Nagai K."/>
            <person name="Kimura K."/>
            <person name="Makita H."/>
            <person name="Sekine M."/>
            <person name="Obayashi M."/>
            <person name="Nishi T."/>
            <person name="Shibahara T."/>
            <person name="Tanaka T."/>
            <person name="Ishii S."/>
            <person name="Yamamoto J."/>
            <person name="Saito K."/>
            <person name="Kawai Y."/>
            <person name="Isono Y."/>
            <person name="Nakamura Y."/>
            <person name="Nagahari K."/>
            <person name="Murakami K."/>
            <person name="Yasuda T."/>
            <person name="Iwayanagi T."/>
            <person name="Wagatsuma M."/>
            <person name="Shiratori A."/>
            <person name="Sudo H."/>
            <person name="Hosoiri T."/>
            <person name="Kaku Y."/>
            <person name="Kodaira H."/>
            <person name="Kondo H."/>
            <person name="Sugawara M."/>
            <person name="Takahashi M."/>
            <person name="Kanda K."/>
            <person name="Yokoi T."/>
            <person name="Furuya T."/>
            <person name="Kikkawa E."/>
            <person name="Omura Y."/>
            <person name="Abe K."/>
            <person name="Kamihara K."/>
            <person name="Katsuta N."/>
            <person name="Sato K."/>
            <person name="Tanikawa M."/>
            <person name="Yamazaki M."/>
            <person name="Ninomiya K."/>
            <person name="Ishibashi T."/>
            <person name="Yamashita H."/>
            <person name="Murakawa K."/>
            <person name="Fujimori K."/>
            <person name="Tanai H."/>
            <person name="Kimata M."/>
            <person name="Watanabe M."/>
            <person name="Hiraoka S."/>
            <person name="Chiba Y."/>
            <person name="Ishida S."/>
            <person name="Ono Y."/>
            <person name="Takiguchi S."/>
            <person name="Watanabe S."/>
            <person name="Yosida M."/>
            <person name="Hotuta T."/>
            <person name="Kusano J."/>
            <person name="Kanehori K."/>
            <person name="Takahashi-Fujii A."/>
            <person name="Hara H."/>
            <person name="Tanase T.-O."/>
            <person name="Nomura Y."/>
            <person name="Togiya S."/>
            <person name="Komai F."/>
            <person name="Hara R."/>
            <person name="Takeuchi K."/>
            <person name="Arita M."/>
            <person name="Imose N."/>
            <person name="Musashino K."/>
            <person name="Yuuki H."/>
            <person name="Oshima A."/>
            <person name="Sasaki N."/>
            <person name="Aotsuka S."/>
            <person name="Yoshikawa Y."/>
            <person name="Matsunawa H."/>
            <person name="Ichihara T."/>
            <person name="Shiohata N."/>
            <person name="Sano S."/>
            <person name="Moriya S."/>
            <person name="Momiyama H."/>
            <person name="Satoh N."/>
            <person name="Takami S."/>
            <person name="Terashima Y."/>
            <person name="Suzuki O."/>
            <person name="Nakagawa S."/>
            <person name="Senoh A."/>
            <person name="Mizoguchi H."/>
            <person name="Goto Y."/>
            <person name="Shimizu F."/>
            <person name="Wakebe H."/>
            <person name="Hishigaki H."/>
            <person name="Watanabe T."/>
            <person name="Sugiyama A."/>
            <person name="Takemoto M."/>
            <person name="Kawakami B."/>
            <person name="Yamazaki M."/>
            <person name="Watanabe K."/>
            <person name="Kumagai A."/>
            <person name="Itakura S."/>
            <person name="Fukuzumi Y."/>
            <person name="Fujimori Y."/>
            <person name="Komiyama M."/>
            <person name="Tashiro H."/>
            <person name="Tanigami A."/>
            <person name="Fujiwara T."/>
            <person name="Ono T."/>
            <person name="Yamada K."/>
            <person name="Fujii Y."/>
            <person name="Ozaki K."/>
            <person name="Hirao M."/>
            <person name="Ohmori Y."/>
            <person name="Kawabata A."/>
            <person name="Hikiji T."/>
            <person name="Kobatake N."/>
            <person name="Inagaki H."/>
            <person name="Ikema Y."/>
            <person name="Okamoto S."/>
            <person name="Okitani R."/>
            <person name="Kawakami T."/>
            <person name="Noguchi S."/>
            <person name="Itoh T."/>
            <person name="Shigeta K."/>
            <person name="Senba T."/>
            <person name="Matsumura K."/>
            <person name="Nakajima Y."/>
            <person name="Mizuno T."/>
            <person name="Morinaga M."/>
            <person name="Sasaki M."/>
            <person name="Togashi T."/>
            <person name="Oyama M."/>
            <person name="Hata H."/>
            <person name="Watanabe M."/>
            <person name="Komatsu T."/>
            <person name="Mizushima-Sugano J."/>
            <person name="Satoh T."/>
            <person name="Shirai Y."/>
            <person name="Takahashi Y."/>
            <person name="Nakagawa K."/>
            <person name="Okumura K."/>
            <person name="Nagase T."/>
            <person name="Nomura N."/>
            <person name="Kikuchi H."/>
            <person name="Masuho Y."/>
            <person name="Yamashita R."/>
            <person name="Nakai K."/>
            <person name="Yada T."/>
            <person name="Nakamura Y."/>
            <person name="Ohara O."/>
            <person name="Isogai T."/>
            <person name="Sugano S."/>
        </authorList>
    </citation>
    <scope>NUCLEOTIDE SEQUENCE [LARGE SCALE MRNA] (ISOFORM 1)</scope>
    <scope>VARIANTS ILE-299 AND VAL-1056</scope>
    <source>
        <tissue>Brain</tissue>
    </source>
</reference>
<reference key="5">
    <citation type="journal article" date="2007" name="BMC Genomics">
        <title>The full-ORF clone resource of the German cDNA consortium.</title>
        <authorList>
            <person name="Bechtel S."/>
            <person name="Rosenfelder H."/>
            <person name="Duda A."/>
            <person name="Schmidt C.P."/>
            <person name="Ernst U."/>
            <person name="Wellenreuther R."/>
            <person name="Mehrle A."/>
            <person name="Schuster C."/>
            <person name="Bahr A."/>
            <person name="Bloecker H."/>
            <person name="Heubner D."/>
            <person name="Hoerlein A."/>
            <person name="Michel G."/>
            <person name="Wedler H."/>
            <person name="Koehrer K."/>
            <person name="Ottenwaelder B."/>
            <person name="Poustka A."/>
            <person name="Wiemann S."/>
            <person name="Schupp I."/>
        </authorList>
    </citation>
    <scope>NUCLEOTIDE SEQUENCE [LARGE SCALE MRNA] (ISOFORM 2)</scope>
    <scope>VARIANT VAL-1056</scope>
    <source>
        <tissue>Testis</tissue>
    </source>
</reference>
<reference key="6">
    <citation type="journal article" date="2006" name="Nature">
        <title>The DNA sequence, annotation and analysis of human chromosome 3.</title>
        <authorList>
            <person name="Muzny D.M."/>
            <person name="Scherer S.E."/>
            <person name="Kaul R."/>
            <person name="Wang J."/>
            <person name="Yu J."/>
            <person name="Sudbrak R."/>
            <person name="Buhay C.J."/>
            <person name="Chen R."/>
            <person name="Cree A."/>
            <person name="Ding Y."/>
            <person name="Dugan-Rocha S."/>
            <person name="Gill R."/>
            <person name="Gunaratne P."/>
            <person name="Harris R.A."/>
            <person name="Hawes A.C."/>
            <person name="Hernandez J."/>
            <person name="Hodgson A.V."/>
            <person name="Hume J."/>
            <person name="Jackson A."/>
            <person name="Khan Z.M."/>
            <person name="Kovar-Smith C."/>
            <person name="Lewis L.R."/>
            <person name="Lozado R.J."/>
            <person name="Metzker M.L."/>
            <person name="Milosavljevic A."/>
            <person name="Miner G.R."/>
            <person name="Morgan M.B."/>
            <person name="Nazareth L.V."/>
            <person name="Scott G."/>
            <person name="Sodergren E."/>
            <person name="Song X.-Z."/>
            <person name="Steffen D."/>
            <person name="Wei S."/>
            <person name="Wheeler D.A."/>
            <person name="Wright M.W."/>
            <person name="Worley K.C."/>
            <person name="Yuan Y."/>
            <person name="Zhang Z."/>
            <person name="Adams C.Q."/>
            <person name="Ansari-Lari M.A."/>
            <person name="Ayele M."/>
            <person name="Brown M.J."/>
            <person name="Chen G."/>
            <person name="Chen Z."/>
            <person name="Clendenning J."/>
            <person name="Clerc-Blankenburg K.P."/>
            <person name="Chen R."/>
            <person name="Chen Z."/>
            <person name="Davis C."/>
            <person name="Delgado O."/>
            <person name="Dinh H.H."/>
            <person name="Dong W."/>
            <person name="Draper H."/>
            <person name="Ernst S."/>
            <person name="Fu G."/>
            <person name="Gonzalez-Garay M.L."/>
            <person name="Garcia D.K."/>
            <person name="Gillett W."/>
            <person name="Gu J."/>
            <person name="Hao B."/>
            <person name="Haugen E."/>
            <person name="Havlak P."/>
            <person name="He X."/>
            <person name="Hennig S."/>
            <person name="Hu S."/>
            <person name="Huang W."/>
            <person name="Jackson L.R."/>
            <person name="Jacob L.S."/>
            <person name="Kelly S.H."/>
            <person name="Kube M."/>
            <person name="Levy R."/>
            <person name="Li Z."/>
            <person name="Liu B."/>
            <person name="Liu J."/>
            <person name="Liu W."/>
            <person name="Lu J."/>
            <person name="Maheshwari M."/>
            <person name="Nguyen B.-V."/>
            <person name="Okwuonu G.O."/>
            <person name="Palmeiri A."/>
            <person name="Pasternak S."/>
            <person name="Perez L.M."/>
            <person name="Phelps K.A."/>
            <person name="Plopper F.J."/>
            <person name="Qiang B."/>
            <person name="Raymond C."/>
            <person name="Rodriguez R."/>
            <person name="Saenphimmachak C."/>
            <person name="Santibanez J."/>
            <person name="Shen H."/>
            <person name="Shen Y."/>
            <person name="Subramanian S."/>
            <person name="Tabor P.E."/>
            <person name="Verduzco D."/>
            <person name="Waldron L."/>
            <person name="Wang J."/>
            <person name="Wang J."/>
            <person name="Wang Q."/>
            <person name="Williams G.A."/>
            <person name="Wong G.K.-S."/>
            <person name="Yao Z."/>
            <person name="Zhang J."/>
            <person name="Zhang X."/>
            <person name="Zhao G."/>
            <person name="Zhou J."/>
            <person name="Zhou Y."/>
            <person name="Nelson D."/>
            <person name="Lehrach H."/>
            <person name="Reinhardt R."/>
            <person name="Naylor S.L."/>
            <person name="Yang H."/>
            <person name="Olson M."/>
            <person name="Weinstock G."/>
            <person name="Gibbs R.A."/>
        </authorList>
    </citation>
    <scope>NUCLEOTIDE SEQUENCE [LARGE SCALE GENOMIC DNA]</scope>
</reference>
<reference key="7">
    <citation type="submission" date="2005-07" db="EMBL/GenBank/DDBJ databases">
        <authorList>
            <person name="Mural R.J."/>
            <person name="Istrail S."/>
            <person name="Sutton G.G."/>
            <person name="Florea L."/>
            <person name="Halpern A.L."/>
            <person name="Mobarry C.M."/>
            <person name="Lippert R."/>
            <person name="Walenz B."/>
            <person name="Shatkay H."/>
            <person name="Dew I."/>
            <person name="Miller J.R."/>
            <person name="Flanigan M.J."/>
            <person name="Edwards N.J."/>
            <person name="Bolanos R."/>
            <person name="Fasulo D."/>
            <person name="Halldorsson B.V."/>
            <person name="Hannenhalli S."/>
            <person name="Turner R."/>
            <person name="Yooseph S."/>
            <person name="Lu F."/>
            <person name="Nusskern D.R."/>
            <person name="Shue B.C."/>
            <person name="Zheng X.H."/>
            <person name="Zhong F."/>
            <person name="Delcher A.L."/>
            <person name="Huson D.H."/>
            <person name="Kravitz S.A."/>
            <person name="Mouchard L."/>
            <person name="Reinert K."/>
            <person name="Remington K.A."/>
            <person name="Clark A.G."/>
            <person name="Waterman M.S."/>
            <person name="Eichler E.E."/>
            <person name="Adams M.D."/>
            <person name="Hunkapiller M.W."/>
            <person name="Myers E.W."/>
            <person name="Venter J.C."/>
        </authorList>
    </citation>
    <scope>NUCLEOTIDE SEQUENCE [LARGE SCALE GENOMIC DNA]</scope>
    <scope>VARIANTS ILE-299 AND VAL-1056</scope>
</reference>
<reference key="8">
    <citation type="journal article" date="2004" name="Genome Res.">
        <title>The status, quality, and expansion of the NIH full-length cDNA project: the Mammalian Gene Collection (MGC).</title>
        <authorList>
            <consortium name="The MGC Project Team"/>
        </authorList>
    </citation>
    <scope>NUCLEOTIDE SEQUENCE [LARGE SCALE MRNA] (ISOFORM 1)</scope>
    <scope>VARIANTS ILE-299 AND VAL-1056</scope>
    <source>
        <tissue>Eye</tissue>
        <tissue>PNS</tissue>
        <tissue>Testis</tissue>
    </source>
</reference>
<reference key="9">
    <citation type="journal article" date="1998" name="J. Auton. Nerv. Syst.">
        <title>Characterization of a partial cDNA clone detected by imidazoline receptor-selective antisera.</title>
        <authorList>
            <person name="Ivanov T.R."/>
            <person name="Jones J.C."/>
            <person name="Dontenwill M."/>
            <person name="Bousquet P."/>
            <person name="Piletz J.E."/>
        </authorList>
    </citation>
    <scope>NUCLEOTIDE SEQUENCE [MRNA] OF 469-1063 (ISOFORM 1)</scope>
    <scope>TISSUE SPECIFICITY</scope>
    <scope>VARIANT VAL-1056</scope>
    <source>
        <tissue>Hippocampus</tissue>
    </source>
</reference>
<reference key="10">
    <citation type="journal article" date="2002" name="J. Biol. Chem.">
        <title>Insulin receptor substrate 4 associates with the protein IRAS.</title>
        <authorList>
            <person name="Sano H."/>
            <person name="Liu S.C.H."/>
            <person name="Lane W.S."/>
            <person name="Piletz J.E."/>
            <person name="Lienhard G.E."/>
        </authorList>
    </citation>
    <scope>INTERACTION WITH GRB2; IRS4 AND PIK3R1</scope>
    <scope>SUBCELLULAR LOCATION</scope>
</reference>
<reference key="11">
    <citation type="journal article" date="2003" name="Ann. N. Y. Acad. Sci.">
        <title>IRAS is an anti-apoptotic protein.</title>
        <authorList>
            <person name="Dontenwill M."/>
            <person name="Piletz J.E."/>
            <person name="Chen M."/>
            <person name="Baldwin J."/>
            <person name="Pascal G."/>
            <person name="Ronde P."/>
            <person name="Dupuy L."/>
            <person name="Greney H."/>
            <person name="Takeda K."/>
            <person name="Bousquetd P."/>
        </authorList>
    </citation>
    <scope>FUNCTION</scope>
</reference>
<reference key="12">
    <citation type="journal article" date="2003" name="Cell Death Differ.">
        <title>IRAS, the human homologue of Nischarin, prolongs survival of transfected PC12 cells.</title>
        <authorList>
            <person name="Dontenwill M."/>
            <person name="Pascal G."/>
            <person name="Piletz J.E."/>
            <person name="Chen M."/>
            <person name="Baldwin J."/>
            <person name="Ronde P."/>
            <person name="Dupuy L."/>
            <person name="Urosevic D."/>
            <person name="Greney H."/>
            <person name="Takeda K."/>
            <person name="Bousquet P."/>
        </authorList>
    </citation>
    <scope>FUNCTION</scope>
    <scope>SUBCELLULAR LOCATION</scope>
</reference>
<reference key="13">
    <citation type="journal article" date="2004" name="J. Biol. Chem.">
        <title>Human Nischarin/imidazoline receptor antisera-selected protein is targeted to the endosomes by a combined action of a PX domain and a coiled-coil region.</title>
        <authorList>
            <person name="Lim K.-P."/>
            <person name="Hong W."/>
        </authorList>
    </citation>
    <scope>FUNCTION</scope>
    <scope>SUBUNIT</scope>
    <scope>INTERACTION WITH ITGA5</scope>
    <scope>MUTAGENESIS OF ARG-49 AND TYR-50</scope>
    <scope>SUBCELLULAR LOCATION</scope>
</reference>
<reference key="14">
    <citation type="journal article" date="2009" name="Anal. Chem.">
        <title>Lys-N and trypsin cover complementary parts of the phosphoproteome in a refined SCX-based approach.</title>
        <authorList>
            <person name="Gauci S."/>
            <person name="Helbig A.O."/>
            <person name="Slijper M."/>
            <person name="Krijgsveld J."/>
            <person name="Heck A.J."/>
            <person name="Mohammed S."/>
        </authorList>
    </citation>
    <scope>ACETYLATION [LARGE SCALE ANALYSIS] AT ALA-2</scope>
    <scope>CLEAVAGE OF INITIATOR METHIONINE [LARGE SCALE ANALYSIS]</scope>
    <scope>IDENTIFICATION BY MASS SPECTROMETRY [LARGE SCALE ANALYSIS]</scope>
</reference>
<reference key="15">
    <citation type="journal article" date="2009" name="Sci. Signal.">
        <title>Quantitative phosphoproteomic analysis of T cell receptor signaling reveals system-wide modulation of protein-protein interactions.</title>
        <authorList>
            <person name="Mayya V."/>
            <person name="Lundgren D.H."/>
            <person name="Hwang S.-I."/>
            <person name="Rezaul K."/>
            <person name="Wu L."/>
            <person name="Eng J.K."/>
            <person name="Rodionov V."/>
            <person name="Han D.K."/>
        </authorList>
    </citation>
    <scope>PHOSPHORYLATION [LARGE SCALE ANALYSIS] AT SER-1284</scope>
    <scope>IDENTIFICATION BY MASS SPECTROMETRY [LARGE SCALE ANALYSIS]</scope>
    <source>
        <tissue>Leukemic T-cell</tissue>
    </source>
</reference>
<reference key="16">
    <citation type="journal article" date="2011" name="BMC Syst. Biol.">
        <title>Initial characterization of the human central proteome.</title>
        <authorList>
            <person name="Burkard T.R."/>
            <person name="Planyavsky M."/>
            <person name="Kaupe I."/>
            <person name="Breitwieser F.P."/>
            <person name="Buerckstuemmer T."/>
            <person name="Bennett K.L."/>
            <person name="Superti-Furga G."/>
            <person name="Colinge J."/>
        </authorList>
    </citation>
    <scope>IDENTIFICATION BY MASS SPECTROMETRY [LARGE SCALE ANALYSIS]</scope>
</reference>
<reference key="17">
    <citation type="journal article" date="2013" name="J. Biol. Chem.">
        <title>Integrin-binding protein nischarin interacts with tumor suppressor liver kinase B1 (LKB1) to regulate cell migration of breast epithelial cells.</title>
        <authorList>
            <person name="Jain P."/>
            <person name="Baranwal S."/>
            <person name="Dong S."/>
            <person name="Struckhoff A.P."/>
            <person name="Worthylake R.A."/>
            <person name="Alahari S.K."/>
        </authorList>
    </citation>
    <scope>INTERACTION WITH STK11</scope>
    <scope>SUBCELLULAR LOCATION</scope>
</reference>
<reference key="18">
    <citation type="journal article" date="2013" name="J. Proteome Res.">
        <title>Toward a comprehensive characterization of a human cancer cell phosphoproteome.</title>
        <authorList>
            <person name="Zhou H."/>
            <person name="Di Palma S."/>
            <person name="Preisinger C."/>
            <person name="Peng M."/>
            <person name="Polat A.N."/>
            <person name="Heck A.J."/>
            <person name="Mohammed S."/>
        </authorList>
    </citation>
    <scope>PHOSPHORYLATION [LARGE SCALE ANALYSIS] AT SER-1022 AND SER-1284</scope>
    <scope>IDENTIFICATION BY MASS SPECTROMETRY [LARGE SCALE ANALYSIS]</scope>
    <source>
        <tissue>Erythroleukemia</tissue>
    </source>
</reference>
<reference key="19">
    <citation type="submission" date="2010-10" db="PDB data bank">
        <title>Crystal structure of nischarin PX-domain.</title>
        <authorList>
            <consortium name="Structural genomics consortium (SGC)"/>
        </authorList>
    </citation>
    <scope>X-RAY CRYSTALLOGRAPHY (2.27 ANGSTROMS) OF 18-124</scope>
</reference>
<keyword id="KW-0002">3D-structure</keyword>
<keyword id="KW-0007">Acetylation</keyword>
<keyword id="KW-0025">Alternative splicing</keyword>
<keyword id="KW-0053">Apoptosis</keyword>
<keyword id="KW-1003">Cell membrane</keyword>
<keyword id="KW-0175">Coiled coil</keyword>
<keyword id="KW-0963">Cytoplasm</keyword>
<keyword id="KW-0967">Endosome</keyword>
<keyword id="KW-0433">Leucine-rich repeat</keyword>
<keyword id="KW-0472">Membrane</keyword>
<keyword id="KW-0597">Phosphoprotein</keyword>
<keyword id="KW-1267">Proteomics identification</keyword>
<keyword id="KW-0675">Receptor</keyword>
<keyword id="KW-1185">Reference proteome</keyword>
<keyword id="KW-0677">Repeat</keyword>
<dbReference type="EMBL" id="AF082516">
    <property type="protein sequence ID" value="AAC33104.1"/>
    <property type="molecule type" value="mRNA"/>
</dbReference>
<dbReference type="EMBL" id="AB023192">
    <property type="protein sequence ID" value="BAA76819.1"/>
    <property type="status" value="ALT_INIT"/>
    <property type="molecule type" value="mRNA"/>
</dbReference>
<dbReference type="EMBL" id="AK291398">
    <property type="protein sequence ID" value="BAF84087.1"/>
    <property type="molecule type" value="mRNA"/>
</dbReference>
<dbReference type="EMBL" id="AL117432">
    <property type="protein sequence ID" value="CAB55920.1"/>
    <property type="molecule type" value="mRNA"/>
</dbReference>
<dbReference type="EMBL" id="AC006208">
    <property type="status" value="NOT_ANNOTATED_CDS"/>
    <property type="molecule type" value="Genomic_DNA"/>
</dbReference>
<dbReference type="EMBL" id="CH471055">
    <property type="protein sequence ID" value="EAW65229.1"/>
    <property type="molecule type" value="Genomic_DNA"/>
</dbReference>
<dbReference type="EMBL" id="BC038102">
    <property type="protein sequence ID" value="AAH38102.1"/>
    <property type="molecule type" value="mRNA"/>
</dbReference>
<dbReference type="EMBL" id="BC054494">
    <property type="protein sequence ID" value="AAH54494.1"/>
    <property type="molecule type" value="mRNA"/>
</dbReference>
<dbReference type="EMBL" id="BC056900">
    <property type="protein sequence ID" value="AAH56900.1"/>
    <property type="molecule type" value="mRNA"/>
</dbReference>
<dbReference type="EMBL" id="AF058290">
    <property type="protein sequence ID" value="AAC33321.1"/>
    <property type="molecule type" value="mRNA"/>
</dbReference>
<dbReference type="CCDS" id="CCDS33767.1">
    <molecule id="Q9Y2I1-1"/>
</dbReference>
<dbReference type="CCDS" id="CCDS63651.1">
    <molecule id="Q9Y2I1-4"/>
</dbReference>
<dbReference type="CCDS" id="CCDS63652.1">
    <molecule id="Q9Y2I1-3"/>
</dbReference>
<dbReference type="PIR" id="T17230">
    <property type="entry name" value="T17230"/>
</dbReference>
<dbReference type="RefSeq" id="NP_001263222.1">
    <property type="nucleotide sequence ID" value="NM_001276293.1"/>
</dbReference>
<dbReference type="RefSeq" id="NP_001263223.2">
    <molecule id="Q9Y2I1-4"/>
    <property type="nucleotide sequence ID" value="NM_001276294.2"/>
</dbReference>
<dbReference type="RefSeq" id="NP_009115.3">
    <molecule id="Q9Y2I1-1"/>
    <property type="nucleotide sequence ID" value="NM_007184.4"/>
</dbReference>
<dbReference type="PDB" id="3P0C">
    <property type="method" value="X-ray"/>
    <property type="resolution" value="2.27 A"/>
    <property type="chains" value="A/B=18-124"/>
</dbReference>
<dbReference type="PDB" id="8ESF">
    <property type="method" value="X-ray"/>
    <property type="resolution" value="2.56 A"/>
    <property type="chains" value="A/B=1-468"/>
</dbReference>
<dbReference type="PDBsum" id="3P0C"/>
<dbReference type="PDBsum" id="8ESF"/>
<dbReference type="SMR" id="Q9Y2I1"/>
<dbReference type="BioGRID" id="116358">
    <property type="interactions" value="195"/>
</dbReference>
<dbReference type="CORUM" id="Q9Y2I1"/>
<dbReference type="FunCoup" id="Q9Y2I1">
    <property type="interactions" value="2836"/>
</dbReference>
<dbReference type="IntAct" id="Q9Y2I1">
    <property type="interactions" value="92"/>
</dbReference>
<dbReference type="MINT" id="Q9Y2I1"/>
<dbReference type="STRING" id="9606.ENSP00000418232"/>
<dbReference type="BindingDB" id="Q9Y2I1"/>
<dbReference type="ChEMBL" id="CHEMBL3923"/>
<dbReference type="DrugBank" id="DB08838">
    <property type="generic name" value="Agmatine"/>
</dbReference>
<dbReference type="DrugBank" id="DB09242">
    <property type="generic name" value="Moxonidine"/>
</dbReference>
<dbReference type="DrugBank" id="DB15133">
    <property type="generic name" value="Tepotinib"/>
</dbReference>
<dbReference type="DrugBank" id="DB00697">
    <property type="generic name" value="Tizanidine"/>
</dbReference>
<dbReference type="DrugCentral" id="Q9Y2I1"/>
<dbReference type="iPTMnet" id="Q9Y2I1"/>
<dbReference type="PhosphoSitePlus" id="Q9Y2I1"/>
<dbReference type="BioMuta" id="NISCH"/>
<dbReference type="DMDM" id="296439287"/>
<dbReference type="jPOST" id="Q9Y2I1"/>
<dbReference type="MassIVE" id="Q9Y2I1"/>
<dbReference type="PaxDb" id="9606-ENSP00000339958"/>
<dbReference type="PeptideAtlas" id="Q9Y2I1"/>
<dbReference type="ProteomicsDB" id="85789">
    <molecule id="Q9Y2I1-1"/>
</dbReference>
<dbReference type="ProteomicsDB" id="85790">
    <molecule id="Q9Y2I1-2"/>
</dbReference>
<dbReference type="ProteomicsDB" id="85791">
    <molecule id="Q9Y2I1-3"/>
</dbReference>
<dbReference type="ProteomicsDB" id="85792">
    <molecule id="Q9Y2I1-4"/>
</dbReference>
<dbReference type="Pumba" id="Q9Y2I1"/>
<dbReference type="Antibodypedia" id="14512">
    <property type="antibodies" value="106 antibodies from 24 providers"/>
</dbReference>
<dbReference type="DNASU" id="11188"/>
<dbReference type="Ensembl" id="ENST00000345716.9">
    <molecule id="Q9Y2I1-1"/>
    <property type="protein sequence ID" value="ENSP00000339958.4"/>
    <property type="gene ID" value="ENSG00000010322.16"/>
</dbReference>
<dbReference type="Ensembl" id="ENST00000420808.2">
    <molecule id="Q9Y2I1-4"/>
    <property type="protein sequence ID" value="ENSP00000392484.2"/>
    <property type="gene ID" value="ENSG00000010322.16"/>
</dbReference>
<dbReference type="Ensembl" id="ENST00000479054.5">
    <molecule id="Q9Y2I1-1"/>
    <property type="protein sequence ID" value="ENSP00000418232.1"/>
    <property type="gene ID" value="ENSG00000010322.16"/>
</dbReference>
<dbReference type="GeneID" id="11188"/>
<dbReference type="KEGG" id="hsa:11188"/>
<dbReference type="MANE-Select" id="ENST00000345716.9">
    <property type="protein sequence ID" value="ENSP00000339958.4"/>
    <property type="RefSeq nucleotide sequence ID" value="NM_007184.4"/>
    <property type="RefSeq protein sequence ID" value="NP_009115.3"/>
</dbReference>
<dbReference type="UCSC" id="uc003ded.5">
    <molecule id="Q9Y2I1-1"/>
    <property type="organism name" value="human"/>
</dbReference>
<dbReference type="AGR" id="HGNC:18006"/>
<dbReference type="CTD" id="11188"/>
<dbReference type="DisGeNET" id="11188"/>
<dbReference type="GeneCards" id="NISCH"/>
<dbReference type="HGNC" id="HGNC:18006">
    <property type="gene designation" value="NISCH"/>
</dbReference>
<dbReference type="HPA" id="ENSG00000010322">
    <property type="expression patterns" value="Tissue enhanced (brain)"/>
</dbReference>
<dbReference type="MalaCards" id="NISCH"/>
<dbReference type="MIM" id="615507">
    <property type="type" value="gene"/>
</dbReference>
<dbReference type="neXtProt" id="NX_Q9Y2I1"/>
<dbReference type="OpenTargets" id="ENSG00000010322"/>
<dbReference type="PharmGKB" id="PA31635"/>
<dbReference type="VEuPathDB" id="HostDB:ENSG00000010322"/>
<dbReference type="eggNOG" id="KOG1259">
    <property type="taxonomic scope" value="Eukaryota"/>
</dbReference>
<dbReference type="GeneTree" id="ENSGT00940000156494"/>
<dbReference type="HOGENOM" id="CLU_252294_0_0_1"/>
<dbReference type="InParanoid" id="Q9Y2I1"/>
<dbReference type="OMA" id="WSKNDLC"/>
<dbReference type="OrthoDB" id="430293at2759"/>
<dbReference type="PAN-GO" id="Q9Y2I1">
    <property type="GO annotations" value="2 GO annotations based on evolutionary models"/>
</dbReference>
<dbReference type="PhylomeDB" id="Q9Y2I1"/>
<dbReference type="TreeFam" id="TF320547"/>
<dbReference type="PathwayCommons" id="Q9Y2I1"/>
<dbReference type="Reactome" id="R-HSA-9013149">
    <property type="pathway name" value="RAC1 GTPase cycle"/>
</dbReference>
<dbReference type="Reactome" id="R-HSA-9696264">
    <property type="pathway name" value="RND3 GTPase cycle"/>
</dbReference>
<dbReference type="Reactome" id="R-HSA-9696270">
    <property type="pathway name" value="RND2 GTPase cycle"/>
</dbReference>
<dbReference type="SignaLink" id="Q9Y2I1"/>
<dbReference type="BioGRID-ORCS" id="11188">
    <property type="hits" value="64 hits in 1172 CRISPR screens"/>
</dbReference>
<dbReference type="ChiTaRS" id="NISCH">
    <property type="organism name" value="human"/>
</dbReference>
<dbReference type="EvolutionaryTrace" id="Q9Y2I1"/>
<dbReference type="GeneWiki" id="NISCH"/>
<dbReference type="GenomeRNAi" id="11188"/>
<dbReference type="Pharos" id="Q9Y2I1">
    <property type="development level" value="Tclin"/>
</dbReference>
<dbReference type="PRO" id="PR:Q9Y2I1"/>
<dbReference type="Proteomes" id="UP000005640">
    <property type="component" value="Chromosome 3"/>
</dbReference>
<dbReference type="RNAct" id="Q9Y2I1">
    <property type="molecule type" value="protein"/>
</dbReference>
<dbReference type="Bgee" id="ENSG00000010322">
    <property type="expression patterns" value="Expressed in middle temporal gyrus and 205 other cell types or tissues"/>
</dbReference>
<dbReference type="ExpressionAtlas" id="Q9Y2I1">
    <property type="expression patterns" value="baseline and differential"/>
</dbReference>
<dbReference type="GO" id="GO:0005737">
    <property type="term" value="C:cytoplasm"/>
    <property type="evidence" value="ECO:0000318"/>
    <property type="project" value="GO_Central"/>
</dbReference>
<dbReference type="GO" id="GO:0005829">
    <property type="term" value="C:cytosol"/>
    <property type="evidence" value="ECO:0000314"/>
    <property type="project" value="BHF-UCL"/>
</dbReference>
<dbReference type="GO" id="GO:0005769">
    <property type="term" value="C:early endosome"/>
    <property type="evidence" value="ECO:0007669"/>
    <property type="project" value="UniProtKB-SubCell"/>
</dbReference>
<dbReference type="GO" id="GO:0045171">
    <property type="term" value="C:intercellular bridge"/>
    <property type="evidence" value="ECO:0000314"/>
    <property type="project" value="HPA"/>
</dbReference>
<dbReference type="GO" id="GO:0043231">
    <property type="term" value="C:intracellular membrane-bounded organelle"/>
    <property type="evidence" value="ECO:0000314"/>
    <property type="project" value="HPA"/>
</dbReference>
<dbReference type="GO" id="GO:0016020">
    <property type="term" value="C:membrane"/>
    <property type="evidence" value="ECO:0007005"/>
    <property type="project" value="UniProtKB"/>
</dbReference>
<dbReference type="GO" id="GO:0015630">
    <property type="term" value="C:microtubule cytoskeleton"/>
    <property type="evidence" value="ECO:0000314"/>
    <property type="project" value="HPA"/>
</dbReference>
<dbReference type="GO" id="GO:0005654">
    <property type="term" value="C:nucleoplasm"/>
    <property type="evidence" value="ECO:0000314"/>
    <property type="project" value="HPA"/>
</dbReference>
<dbReference type="GO" id="GO:0005886">
    <property type="term" value="C:plasma membrane"/>
    <property type="evidence" value="ECO:0000314"/>
    <property type="project" value="BHF-UCL"/>
</dbReference>
<dbReference type="GO" id="GO:0055037">
    <property type="term" value="C:recycling endosome"/>
    <property type="evidence" value="ECO:0007669"/>
    <property type="project" value="UniProtKB-SubCell"/>
</dbReference>
<dbReference type="GO" id="GO:0042802">
    <property type="term" value="F:identical protein binding"/>
    <property type="evidence" value="ECO:0000353"/>
    <property type="project" value="IntAct"/>
</dbReference>
<dbReference type="GO" id="GO:0005178">
    <property type="term" value="F:integrin binding"/>
    <property type="evidence" value="ECO:0007669"/>
    <property type="project" value="Ensembl"/>
</dbReference>
<dbReference type="GO" id="GO:0035091">
    <property type="term" value="F:phosphatidylinositol binding"/>
    <property type="evidence" value="ECO:0007669"/>
    <property type="project" value="InterPro"/>
</dbReference>
<dbReference type="GO" id="GO:0030036">
    <property type="term" value="P:actin cytoskeleton organization"/>
    <property type="evidence" value="ECO:0007669"/>
    <property type="project" value="Ensembl"/>
</dbReference>
<dbReference type="GO" id="GO:0006915">
    <property type="term" value="P:apoptotic process"/>
    <property type="evidence" value="ECO:0007669"/>
    <property type="project" value="UniProtKB-KW"/>
</dbReference>
<dbReference type="GO" id="GO:0030336">
    <property type="term" value="P:negative regulation of cell migration"/>
    <property type="evidence" value="ECO:0007669"/>
    <property type="project" value="Ensembl"/>
</dbReference>
<dbReference type="GO" id="GO:0016601">
    <property type="term" value="P:Rac protein signal transduction"/>
    <property type="evidence" value="ECO:0007669"/>
    <property type="project" value="Ensembl"/>
</dbReference>
<dbReference type="CDD" id="cd06875">
    <property type="entry name" value="PX_IRAS"/>
    <property type="match status" value="1"/>
</dbReference>
<dbReference type="FunFam" id="3.30.1520.10:FF:000020">
    <property type="entry name" value="nischarin isoform X1"/>
    <property type="match status" value="1"/>
</dbReference>
<dbReference type="FunFam" id="3.80.10.10:FF:000102">
    <property type="entry name" value="nischarin isoform X1"/>
    <property type="match status" value="1"/>
</dbReference>
<dbReference type="FunFam" id="3.80.10.10:FF:000109">
    <property type="entry name" value="nischarin isoform X1"/>
    <property type="match status" value="1"/>
</dbReference>
<dbReference type="Gene3D" id="3.30.1520.10">
    <property type="entry name" value="Phox-like domain"/>
    <property type="match status" value="1"/>
</dbReference>
<dbReference type="Gene3D" id="3.80.10.10">
    <property type="entry name" value="Ribonuclease Inhibitor"/>
    <property type="match status" value="2"/>
</dbReference>
<dbReference type="InterPro" id="IPR001611">
    <property type="entry name" value="Leu-rich_rpt"/>
</dbReference>
<dbReference type="InterPro" id="IPR032675">
    <property type="entry name" value="LRR_dom_sf"/>
</dbReference>
<dbReference type="InterPro" id="IPR037904">
    <property type="entry name" value="Nischarin_PX"/>
</dbReference>
<dbReference type="InterPro" id="IPR001683">
    <property type="entry name" value="PX_dom"/>
</dbReference>
<dbReference type="InterPro" id="IPR036871">
    <property type="entry name" value="PX_dom_sf"/>
</dbReference>
<dbReference type="PANTHER" id="PTHR15454:SF35">
    <property type="entry name" value="NISCHARIN"/>
    <property type="match status" value="1"/>
</dbReference>
<dbReference type="PANTHER" id="PTHR15454">
    <property type="entry name" value="NISCHARIN RELATED"/>
    <property type="match status" value="1"/>
</dbReference>
<dbReference type="Pfam" id="PF00787">
    <property type="entry name" value="PX"/>
    <property type="match status" value="1"/>
</dbReference>
<dbReference type="SMART" id="SM00365">
    <property type="entry name" value="LRR_SD22"/>
    <property type="match status" value="5"/>
</dbReference>
<dbReference type="SMART" id="SM00312">
    <property type="entry name" value="PX"/>
    <property type="match status" value="1"/>
</dbReference>
<dbReference type="SUPFAM" id="SSF52075">
    <property type="entry name" value="Outer arm dynein light chain 1"/>
    <property type="match status" value="1"/>
</dbReference>
<dbReference type="SUPFAM" id="SSF64268">
    <property type="entry name" value="PX domain"/>
    <property type="match status" value="1"/>
</dbReference>
<dbReference type="PROSITE" id="PS51450">
    <property type="entry name" value="LRR"/>
    <property type="match status" value="6"/>
</dbReference>
<dbReference type="PROSITE" id="PS50195">
    <property type="entry name" value="PX"/>
    <property type="match status" value="1"/>
</dbReference>
<proteinExistence type="evidence at protein level"/>
<name>NISCH_HUMAN</name>
<accession>Q9Y2I1</accession>
<accession>C9J245</accession>
<accession>Q6PGP3</accession>
<accession>Q6PIB4</accession>
<accession>Q7L8M3</accession>
<accession>Q7Z2X6</accession>
<accession>Q9UES6</accession>
<accession>Q9UEU4</accession>
<accession>Q9UFW3</accession>
<feature type="initiator methionine" description="Removed" evidence="22">
    <location>
        <position position="1"/>
    </location>
</feature>
<feature type="chain" id="PRO_0000348265" description="Nischarin">
    <location>
        <begin position="2"/>
        <end position="1504"/>
    </location>
</feature>
<feature type="domain" description="PX" evidence="4">
    <location>
        <begin position="11"/>
        <end position="121"/>
    </location>
</feature>
<feature type="repeat" description="LRR 1">
    <location>
        <begin position="288"/>
        <end position="309"/>
    </location>
</feature>
<feature type="repeat" description="LRR 2">
    <location>
        <begin position="311"/>
        <end position="332"/>
    </location>
</feature>
<feature type="repeat" description="LRR 3">
    <location>
        <begin position="333"/>
        <end position="354"/>
    </location>
</feature>
<feature type="repeat" description="LRR 4">
    <location>
        <begin position="356"/>
        <end position="377"/>
    </location>
</feature>
<feature type="repeat" description="LRR 5">
    <location>
        <begin position="378"/>
        <end position="399"/>
    </location>
</feature>
<feature type="repeat" description="LRR 6">
    <location>
        <begin position="403"/>
        <end position="424"/>
    </location>
</feature>
<feature type="region of interest" description="Necessary for binding to phosphoinositide-3-P; not sufficient for targeting to endosomes">
    <location>
        <begin position="2"/>
        <end position="133"/>
    </location>
</feature>
<feature type="region of interest" description="Necessary for homooligomerization and targeting to endosomes">
    <location>
        <begin position="120"/>
        <end position="695"/>
    </location>
</feature>
<feature type="region of interest" description="Interaction with PAK1" evidence="1">
    <location>
        <begin position="245"/>
        <end position="869"/>
    </location>
</feature>
<feature type="region of interest" description="Disordered" evidence="5">
    <location>
        <begin position="463"/>
        <end position="501"/>
    </location>
</feature>
<feature type="region of interest" description="Disordered" evidence="5">
    <location>
        <begin position="524"/>
        <end position="547"/>
    </location>
</feature>
<feature type="region of interest" description="Disordered" evidence="5">
    <location>
        <begin position="554"/>
        <end position="573"/>
    </location>
</feature>
<feature type="region of interest" description="Disordered" evidence="5">
    <location>
        <begin position="628"/>
        <end position="687"/>
    </location>
</feature>
<feature type="region of interest" description="Interaction with LIMK" evidence="1">
    <location>
        <begin position="660"/>
        <end position="869"/>
    </location>
</feature>
<feature type="region of interest" description="Interaction with ITGA5" evidence="1">
    <location>
        <begin position="709"/>
        <end position="807"/>
    </location>
</feature>
<feature type="region of interest" description="Disordered" evidence="5">
    <location>
        <begin position="1016"/>
        <end position="1104"/>
    </location>
</feature>
<feature type="coiled-coil region" evidence="3">
    <location>
        <begin position="634"/>
        <end position="695"/>
    </location>
</feature>
<feature type="compositionally biased region" description="Basic and acidic residues" evidence="5">
    <location>
        <begin position="463"/>
        <end position="478"/>
    </location>
</feature>
<feature type="compositionally biased region" description="Acidic residues" evidence="5">
    <location>
        <begin position="635"/>
        <end position="649"/>
    </location>
</feature>
<feature type="compositionally biased region" description="Acidic residues" evidence="5">
    <location>
        <begin position="661"/>
        <end position="685"/>
    </location>
</feature>
<feature type="compositionally biased region" description="Basic and acidic residues" evidence="5">
    <location>
        <begin position="1032"/>
        <end position="1043"/>
    </location>
</feature>
<feature type="compositionally biased region" description="Low complexity" evidence="5">
    <location>
        <begin position="1063"/>
        <end position="1078"/>
    </location>
</feature>
<feature type="modified residue" description="N-acetylalanine" evidence="22">
    <location>
        <position position="2"/>
    </location>
</feature>
<feature type="modified residue" description="Phosphoserine" evidence="2">
    <location>
        <position position="541"/>
    </location>
</feature>
<feature type="modified residue" description="Phosphoserine" evidence="2">
    <location>
        <position position="543"/>
    </location>
</feature>
<feature type="modified residue" description="Phosphoserine" evidence="2">
    <location>
        <position position="546"/>
    </location>
</feature>
<feature type="modified residue" description="Phosphoserine" evidence="24">
    <location>
        <position position="1022"/>
    </location>
</feature>
<feature type="modified residue" description="Phosphothreonine" evidence="2">
    <location>
        <position position="1282"/>
    </location>
</feature>
<feature type="modified residue" description="Phosphoserine" evidence="23 24">
    <location>
        <position position="1284"/>
    </location>
</feature>
<feature type="splice variant" id="VSP_035131" description="In isoform 2." evidence="20">
    <location>
        <begin position="1"/>
        <end position="511"/>
    </location>
</feature>
<feature type="splice variant" id="VSP_035132" description="In isoform 3." evidence="19">
    <original>IMFVQEEALASSLSSTDSLTPEHQPIAQGCSDSLESIPAGQAASDDLRDVPGAVGGASPEHAEPEVQVVPGSG</original>
    <variation>NRVCTLLLVEPHSPAWAPWLGWGWGRGASTCFQQGTQGGGQCLLQAGPRGGTHGRGAWPDASCCLLGEDSQLL</variation>
    <location>
        <begin position="511"/>
        <end position="583"/>
    </location>
</feature>
<feature type="splice variant" id="VSP_035133" description="In isoform 4." evidence="19">
    <original>MFVQ</original>
    <variation>LGDE</variation>
    <location>
        <begin position="512"/>
        <end position="515"/>
    </location>
</feature>
<feature type="splice variant" id="VSP_035134" description="In isoform 4." evidence="19">
    <location>
        <begin position="516"/>
        <end position="1504"/>
    </location>
</feature>
<feature type="splice variant" id="VSP_035135" description="In isoform 3." evidence="19">
    <location>
        <begin position="584"/>
        <end position="1504"/>
    </location>
</feature>
<feature type="sequence variant" id="VAR_046130" description="In dbSNP:rs9856575." evidence="6 7 10 12 14 18">
    <original>V</original>
    <variation>I</variation>
    <location>
        <position position="299"/>
    </location>
</feature>
<feature type="sequence variant" id="VAR_046131" description="In dbSNP:rs887515." evidence="6 7 10 14 15 17 18">
    <original>A</original>
    <variation>V</variation>
    <location>
        <position position="1056"/>
    </location>
</feature>
<feature type="mutagenesis site" description="Inhibits targeting to endosomes." evidence="13">
    <original>R</original>
    <variation>A</variation>
    <location>
        <position position="49"/>
    </location>
</feature>
<feature type="mutagenesis site" description="Inhibits targeting to endosomes." evidence="13">
    <original>Y</original>
    <variation>A</variation>
    <location>
        <position position="50"/>
    </location>
</feature>
<feature type="sequence conflict" description="In Ref. 8; AAH56900." evidence="21" ref="8">
    <original>M</original>
    <variation>I</variation>
    <location>
        <position position="927"/>
    </location>
</feature>
<feature type="sequence conflict" description="In Ref. 3; BAA76819." evidence="21" ref="3">
    <original>P</original>
    <variation>A</variation>
    <location>
        <position position="1023"/>
    </location>
</feature>
<feature type="sequence conflict" description="In Ref. 8; AAH38102." evidence="21" ref="8">
    <original>S</original>
    <variation>P</variation>
    <location>
        <position position="1123"/>
    </location>
</feature>
<feature type="sequence conflict" description="In Ref. 8; AAH54494." evidence="21" ref="8">
    <original>L</original>
    <variation>F</variation>
    <location>
        <position position="1382"/>
    </location>
</feature>
<feature type="strand" evidence="25">
    <location>
        <begin position="18"/>
        <end position="25"/>
    </location>
</feature>
<feature type="strand" evidence="25">
    <location>
        <begin position="27"/>
        <end position="30"/>
    </location>
</feature>
<feature type="strand" evidence="25">
    <location>
        <begin position="32"/>
        <end position="38"/>
    </location>
</feature>
<feature type="strand" evidence="25">
    <location>
        <begin position="43"/>
        <end position="49"/>
    </location>
</feature>
<feature type="helix" evidence="25">
    <location>
        <begin position="50"/>
        <end position="62"/>
    </location>
</feature>
<feature type="helix" evidence="25">
    <location>
        <begin position="85"/>
        <end position="101"/>
    </location>
</feature>
<feature type="strand" evidence="25">
    <location>
        <begin position="105"/>
        <end position="107"/>
    </location>
</feature>
<feature type="helix" evidence="25">
    <location>
        <begin position="109"/>
        <end position="116"/>
    </location>
</feature>
<gene>
    <name type="primary">NISCH</name>
    <name type="synonym">IRAS</name>
    <name type="synonym">KIAA0975</name>
</gene>